<organism>
    <name type="scientific">Rattus norvegicus</name>
    <name type="common">Rat</name>
    <dbReference type="NCBI Taxonomy" id="10116"/>
    <lineage>
        <taxon>Eukaryota</taxon>
        <taxon>Metazoa</taxon>
        <taxon>Chordata</taxon>
        <taxon>Craniata</taxon>
        <taxon>Vertebrata</taxon>
        <taxon>Euteleostomi</taxon>
        <taxon>Mammalia</taxon>
        <taxon>Eutheria</taxon>
        <taxon>Euarchontoglires</taxon>
        <taxon>Glires</taxon>
        <taxon>Rodentia</taxon>
        <taxon>Myomorpha</taxon>
        <taxon>Muroidea</taxon>
        <taxon>Muridae</taxon>
        <taxon>Murinae</taxon>
        <taxon>Rattus</taxon>
    </lineage>
</organism>
<accession>F1M8W4</accession>
<accession>F1LQN4</accession>
<accession>Q5U1X4</accession>
<name>SOX5_RAT</name>
<evidence type="ECO:0000250" key="1">
    <source>
        <dbReference type="UniProtKB" id="P35710"/>
    </source>
</evidence>
<evidence type="ECO:0000250" key="2">
    <source>
        <dbReference type="UniProtKB" id="P35711"/>
    </source>
</evidence>
<evidence type="ECO:0000255" key="3"/>
<evidence type="ECO:0000255" key="4">
    <source>
        <dbReference type="PROSITE-ProRule" id="PRU00267"/>
    </source>
</evidence>
<evidence type="ECO:0000256" key="5">
    <source>
        <dbReference type="SAM" id="MobiDB-lite"/>
    </source>
</evidence>
<evidence type="ECO:0000269" key="6">
    <source>
    </source>
</evidence>
<evidence type="ECO:0000312" key="7">
    <source>
        <dbReference type="RGD" id="620471"/>
    </source>
</evidence>
<keyword id="KW-0010">Activator</keyword>
<keyword id="KW-0025">Alternative splicing</keyword>
<keyword id="KW-0175">Coiled coil</keyword>
<keyword id="KW-0221">Differentiation</keyword>
<keyword id="KW-0238">DNA-binding</keyword>
<keyword id="KW-0539">Nucleus</keyword>
<keyword id="KW-0597">Phosphoprotein</keyword>
<keyword id="KW-1185">Reference proteome</keyword>
<keyword id="KW-0804">Transcription</keyword>
<keyword id="KW-0805">Transcription regulation</keyword>
<reference key="1">
    <citation type="journal article" date="2004" name="Nature">
        <title>Genome sequence of the Brown Norway rat yields insights into mammalian evolution.</title>
        <authorList>
            <person name="Gibbs R.A."/>
            <person name="Weinstock G.M."/>
            <person name="Metzker M.L."/>
            <person name="Muzny D.M."/>
            <person name="Sodergren E.J."/>
            <person name="Scherer S."/>
            <person name="Scott G."/>
            <person name="Steffen D."/>
            <person name="Worley K.C."/>
            <person name="Burch P.E."/>
            <person name="Okwuonu G."/>
            <person name="Hines S."/>
            <person name="Lewis L."/>
            <person name="Deramo C."/>
            <person name="Delgado O."/>
            <person name="Dugan-Rocha S."/>
            <person name="Miner G."/>
            <person name="Morgan M."/>
            <person name="Hawes A."/>
            <person name="Gill R."/>
            <person name="Holt R.A."/>
            <person name="Adams M.D."/>
            <person name="Amanatides P.G."/>
            <person name="Baden-Tillson H."/>
            <person name="Barnstead M."/>
            <person name="Chin S."/>
            <person name="Evans C.A."/>
            <person name="Ferriera S."/>
            <person name="Fosler C."/>
            <person name="Glodek A."/>
            <person name="Gu Z."/>
            <person name="Jennings D."/>
            <person name="Kraft C.L."/>
            <person name="Nguyen T."/>
            <person name="Pfannkoch C.M."/>
            <person name="Sitter C."/>
            <person name="Sutton G.G."/>
            <person name="Venter J.C."/>
            <person name="Woodage T."/>
            <person name="Smith D."/>
            <person name="Lee H.-M."/>
            <person name="Gustafson E."/>
            <person name="Cahill P."/>
            <person name="Kana A."/>
            <person name="Doucette-Stamm L."/>
            <person name="Weinstock K."/>
            <person name="Fechtel K."/>
            <person name="Weiss R.B."/>
            <person name="Dunn D.M."/>
            <person name="Green E.D."/>
            <person name="Blakesley R.W."/>
            <person name="Bouffard G.G."/>
            <person name="De Jong P.J."/>
            <person name="Osoegawa K."/>
            <person name="Zhu B."/>
            <person name="Marra M."/>
            <person name="Schein J."/>
            <person name="Bosdet I."/>
            <person name="Fjell C."/>
            <person name="Jones S."/>
            <person name="Krzywinski M."/>
            <person name="Mathewson C."/>
            <person name="Siddiqui A."/>
            <person name="Wye N."/>
            <person name="McPherson J."/>
            <person name="Zhao S."/>
            <person name="Fraser C.M."/>
            <person name="Shetty J."/>
            <person name="Shatsman S."/>
            <person name="Geer K."/>
            <person name="Chen Y."/>
            <person name="Abramzon S."/>
            <person name="Nierman W.C."/>
            <person name="Havlak P.H."/>
            <person name="Chen R."/>
            <person name="Durbin K.J."/>
            <person name="Egan A."/>
            <person name="Ren Y."/>
            <person name="Song X.-Z."/>
            <person name="Li B."/>
            <person name="Liu Y."/>
            <person name="Qin X."/>
            <person name="Cawley S."/>
            <person name="Cooney A.J."/>
            <person name="D'Souza L.M."/>
            <person name="Martin K."/>
            <person name="Wu J.Q."/>
            <person name="Gonzalez-Garay M.L."/>
            <person name="Jackson A.R."/>
            <person name="Kalafus K.J."/>
            <person name="McLeod M.P."/>
            <person name="Milosavljevic A."/>
            <person name="Virk D."/>
            <person name="Volkov A."/>
            <person name="Wheeler D.A."/>
            <person name="Zhang Z."/>
            <person name="Bailey J.A."/>
            <person name="Eichler E.E."/>
            <person name="Tuzun E."/>
            <person name="Birney E."/>
            <person name="Mongin E."/>
            <person name="Ureta-Vidal A."/>
            <person name="Woodwark C."/>
            <person name="Zdobnov E."/>
            <person name="Bork P."/>
            <person name="Suyama M."/>
            <person name="Torrents D."/>
            <person name="Alexandersson M."/>
            <person name="Trask B.J."/>
            <person name="Young J.M."/>
            <person name="Huang H."/>
            <person name="Wang H."/>
            <person name="Xing H."/>
            <person name="Daniels S."/>
            <person name="Gietzen D."/>
            <person name="Schmidt J."/>
            <person name="Stevens K."/>
            <person name="Vitt U."/>
            <person name="Wingrove J."/>
            <person name="Camara F."/>
            <person name="Mar Alba M."/>
            <person name="Abril J.F."/>
            <person name="Guigo R."/>
            <person name="Smit A."/>
            <person name="Dubchak I."/>
            <person name="Rubin E.M."/>
            <person name="Couronne O."/>
            <person name="Poliakov A."/>
            <person name="Huebner N."/>
            <person name="Ganten D."/>
            <person name="Goesele C."/>
            <person name="Hummel O."/>
            <person name="Kreitler T."/>
            <person name="Lee Y.-A."/>
            <person name="Monti J."/>
            <person name="Schulz H."/>
            <person name="Zimdahl H."/>
            <person name="Himmelbauer H."/>
            <person name="Lehrach H."/>
            <person name="Jacob H.J."/>
            <person name="Bromberg S."/>
            <person name="Gullings-Handley J."/>
            <person name="Jensen-Seaman M.I."/>
            <person name="Kwitek A.E."/>
            <person name="Lazar J."/>
            <person name="Pasko D."/>
            <person name="Tonellato P.J."/>
            <person name="Twigger S."/>
            <person name="Ponting C.P."/>
            <person name="Duarte J.M."/>
            <person name="Rice S."/>
            <person name="Goodstadt L."/>
            <person name="Beatson S.A."/>
            <person name="Emes R.D."/>
            <person name="Winter E.E."/>
            <person name="Webber C."/>
            <person name="Brandt P."/>
            <person name="Nyakatura G."/>
            <person name="Adetobi M."/>
            <person name="Chiaromonte F."/>
            <person name="Elnitski L."/>
            <person name="Eswara P."/>
            <person name="Hardison R.C."/>
            <person name="Hou M."/>
            <person name="Kolbe D."/>
            <person name="Makova K."/>
            <person name="Miller W."/>
            <person name="Nekrutenko A."/>
            <person name="Riemer C."/>
            <person name="Schwartz S."/>
            <person name="Taylor J."/>
            <person name="Yang S."/>
            <person name="Zhang Y."/>
            <person name="Lindpaintner K."/>
            <person name="Andrews T.D."/>
            <person name="Caccamo M."/>
            <person name="Clamp M."/>
            <person name="Clarke L."/>
            <person name="Curwen V."/>
            <person name="Durbin R.M."/>
            <person name="Eyras E."/>
            <person name="Searle S.M."/>
            <person name="Cooper G.M."/>
            <person name="Batzoglou S."/>
            <person name="Brudno M."/>
            <person name="Sidow A."/>
            <person name="Stone E.A."/>
            <person name="Payseur B.A."/>
            <person name="Bourque G."/>
            <person name="Lopez-Otin C."/>
            <person name="Puente X.S."/>
            <person name="Chakrabarti K."/>
            <person name="Chatterji S."/>
            <person name="Dewey C."/>
            <person name="Pachter L."/>
            <person name="Bray N."/>
            <person name="Yap V.B."/>
            <person name="Caspi A."/>
            <person name="Tesler G."/>
            <person name="Pevzner P.A."/>
            <person name="Haussler D."/>
            <person name="Roskin K.M."/>
            <person name="Baertsch R."/>
            <person name="Clawson H."/>
            <person name="Furey T.S."/>
            <person name="Hinrichs A.S."/>
            <person name="Karolchik D."/>
            <person name="Kent W.J."/>
            <person name="Rosenbloom K.R."/>
            <person name="Trumbower H."/>
            <person name="Weirauch M."/>
            <person name="Cooper D.N."/>
            <person name="Stenson P.D."/>
            <person name="Ma B."/>
            <person name="Brent M."/>
            <person name="Arumugam M."/>
            <person name="Shteynberg D."/>
            <person name="Copley R.R."/>
            <person name="Taylor M.S."/>
            <person name="Riethman H."/>
            <person name="Mudunuri U."/>
            <person name="Peterson J."/>
            <person name="Guyer M."/>
            <person name="Felsenfeld A."/>
            <person name="Old S."/>
            <person name="Mockrin S."/>
            <person name="Collins F.S."/>
        </authorList>
    </citation>
    <scope>NUCLEOTIDE SEQUENCE [LARGE SCALE GENOMIC DNA]</scope>
    <source>
        <strain>Brown Norway</strain>
    </source>
</reference>
<reference key="2">
    <citation type="journal article" date="2004" name="Genome Res.">
        <title>The status, quality, and expansion of the NIH full-length cDNA project: the Mammalian Gene Collection (MGC).</title>
        <authorList>
            <consortium name="The MGC Project Team"/>
        </authorList>
    </citation>
    <scope>NUCLEOTIDE SEQUENCE [LARGE SCALE MRNA] (ISOFORM 2)</scope>
</reference>
<reference key="3">
    <citation type="journal article" date="2015" name="Nucleic Acids Res.">
        <title>The transcription factors SOX9 and SOX5/SOX6 cooperate genome-wide through super-enhancers to drive chondrogenesis.</title>
        <authorList>
            <person name="Liu C.F."/>
            <person name="Lefebvre V."/>
        </authorList>
    </citation>
    <scope>FUNCTION</scope>
    <scope>DNA-BINDING</scope>
</reference>
<proteinExistence type="evidence at protein level"/>
<gene>
    <name evidence="7" type="primary">Sox5</name>
    <name type="synonym">Sox-5</name>
</gene>
<comment type="function">
    <text evidence="1 6">Transcription factor involved in chondrocytes differentiation and cartilage formation (By similarity). Specifically binds the 5'-AACAAT-3' DNA motif present in enhancers and super-enhancers and promotes expression of genes important for chondrogenesis, including cartilage matrix protein-coding genes, such as COL2A1 and AGC1 (By similarity). Required for overt chondrogenesis when condensed prechondrocytes differentiate into early stage chondrocytes: SOX5 and SOX6 cooperatively bind with SOX9 on active enhancers and super-enhancers associated with cartilage-specific genes, and thereby potentiate SOX9's ability to transactivate (PubMed:26150426). Not involved in precartilaginous condensation, the first step in chondrogenesis, during which skeletal progenitors differentiate into prechondrocytes (By similarity). Together with SOX6, required to form and maintain a pool of highly proliferating chondroblasts between epiphyses and metaphyses, to form columnar chondroblasts, delay chondrocyte prehypertrophy but promote hypertrophy, and to delay terminal differentiation of chondrocytes on contact with ossification fronts (By similarity). Binds to the proximal promoter region of the myelin protein MPZ gene (By similarity).</text>
</comment>
<comment type="subunit">
    <text evidence="1">Forms homodimers and heterodimers with SOX6.</text>
</comment>
<comment type="subcellular location">
    <subcellularLocation>
        <location evidence="1">Nucleus</location>
    </subcellularLocation>
</comment>
<comment type="alternative products">
    <event type="alternative splicing"/>
    <isoform>
        <id>F1M8W4-1</id>
        <name>1</name>
        <sequence type="displayed"/>
    </isoform>
    <isoform>
        <id>F1M8W4-2</id>
        <name>2</name>
        <sequence type="described" ref="VSP_060587 VSP_060588"/>
    </isoform>
</comment>
<feature type="chain" id="PRO_0000450216" description="Transcription factor SOX-5">
    <location>
        <begin position="1"/>
        <end position="763"/>
    </location>
</feature>
<feature type="DNA-binding region" description="HMG box" evidence="4">
    <location>
        <begin position="556"/>
        <end position="624"/>
    </location>
</feature>
<feature type="region of interest" description="Disordered" evidence="5">
    <location>
        <begin position="1"/>
        <end position="30"/>
    </location>
</feature>
<feature type="region of interest" description="Disordered" evidence="5">
    <location>
        <begin position="77"/>
        <end position="138"/>
    </location>
</feature>
<feature type="region of interest" description="Disordered" evidence="5">
    <location>
        <begin position="369"/>
        <end position="426"/>
    </location>
</feature>
<feature type="region of interest" description="Disordered" evidence="5">
    <location>
        <begin position="714"/>
        <end position="763"/>
    </location>
</feature>
<feature type="coiled-coil region" evidence="3">
    <location>
        <begin position="195"/>
        <end position="268"/>
    </location>
</feature>
<feature type="compositionally biased region" description="Polar residues" evidence="5">
    <location>
        <begin position="102"/>
        <end position="111"/>
    </location>
</feature>
<feature type="compositionally biased region" description="Basic and acidic residues" evidence="5">
    <location>
        <begin position="716"/>
        <end position="726"/>
    </location>
</feature>
<feature type="compositionally biased region" description="Acidic residues" evidence="5">
    <location>
        <begin position="727"/>
        <end position="752"/>
    </location>
</feature>
<feature type="modified residue" description="Phosphoserine" evidence="2">
    <location>
        <position position="21"/>
    </location>
</feature>
<feature type="modified residue" description="Phosphothreonine" evidence="2">
    <location>
        <position position="131"/>
    </location>
</feature>
<feature type="modified residue" description="Phosphoserine" evidence="2">
    <location>
        <position position="370"/>
    </location>
</feature>
<feature type="modified residue" description="Phosphothreonine" evidence="2">
    <location>
        <position position="372"/>
    </location>
</feature>
<feature type="modified residue" description="Phosphoserine" evidence="2">
    <location>
        <position position="411"/>
    </location>
</feature>
<feature type="modified residue" description="Phosphoserine" evidence="2">
    <location>
        <position position="414"/>
    </location>
</feature>
<feature type="modified residue" description="Phosphoserine" evidence="2">
    <location>
        <position position="439"/>
    </location>
</feature>
<feature type="splice variant" id="VSP_060587" description="In isoform 2.">
    <location>
        <begin position="1"/>
        <end position="322"/>
    </location>
</feature>
<feature type="splice variant" id="VSP_060588" description="In isoform 2.">
    <original>LQQFYAAQLAAMQVSPGGKLLGLPQGNLGAAVSPTSIHTDKSTNSPPPKSK</original>
    <variation>LQ</variation>
    <location>
        <begin position="338"/>
        <end position="388"/>
    </location>
</feature>
<sequence length="763" mass="83971">MLTDPDLPQEFERMSSKRPASPYGETDGEVAMVTSRQKVEEEESERLPAFHLPLHVSFPNKPHSEEFQPVSLLTQEACGPRTPAAQHSTMEVDGNKVMSSLAPYNSSTSPQKAEEGGRQSGESVSSAALGTPERRKGSLADVVDTLKQRKMEELIKNEPEDTPSIEKLLSKDWKDKLLAMGSGNFGEIKGTPESLAEKERQLMGMINQLTSLREQLLAAHDEQKKLAASQIEKQRQQMELAKQQQEQIARQQQQLLQQQHKINLLQQQIQVQGQLPPLMIPVFPPDQRTLAAAAQQGFLLPPGFSYKAGCSDPYPVQLIPTTMAAAAAATPGLGPLQLQQFYAAQLAAMQVSPGGKLLGLPQGNLGAAVSPTSIHTDKSTNSPPPKSKDEVAQPLNLSAKPKTSDGKSPASPTSPHMPALRINSGAGPLKASVPAALASPSARVSTIGYLNDHDAVTKAIQEARQMKEQLRREQQALDGKVAVVNSIGISNCRTEKEKTTLESLTQQLAVKQNEEGKFSHGMMDFNMSGDSDGSAGVSESRIYRESRGRGSNEPHIKRPMNAFMVWAKDERRKILQAFPDMHNSNISKILGSRWKAMTNLEKQPYYEEQARLSKQHLEKYPDYKYKPRPKRTCLVDGKKLRIGEYKAIMRNRRQEMRQYFNVGQQAQIPIATAGVVYPGAIAMAGMPSPHLPSEHSSVSSSPEPGMPVIQSTYGVKGEEPHIKEEIQAEDINGEIYEEYEEEEEDPDVDYGSDSENHIAGQAN</sequence>
<protein>
    <recommendedName>
        <fullName>Transcription factor SOX-5</fullName>
    </recommendedName>
</protein>
<dbReference type="EMBL" id="AABR07062459">
    <property type="status" value="NOT_ANNOTATED_CDS"/>
    <property type="molecule type" value="Genomic_DNA"/>
</dbReference>
<dbReference type="EMBL" id="AABR07062460">
    <property type="status" value="NOT_ANNOTATED_CDS"/>
    <property type="molecule type" value="Genomic_DNA"/>
</dbReference>
<dbReference type="EMBL" id="AABR07062461">
    <property type="status" value="NOT_ANNOTATED_CDS"/>
    <property type="molecule type" value="Genomic_DNA"/>
</dbReference>
<dbReference type="EMBL" id="AABR07062462">
    <property type="status" value="NOT_ANNOTATED_CDS"/>
    <property type="molecule type" value="Genomic_DNA"/>
</dbReference>
<dbReference type="EMBL" id="AABR07062463">
    <property type="status" value="NOT_ANNOTATED_CDS"/>
    <property type="molecule type" value="Genomic_DNA"/>
</dbReference>
<dbReference type="EMBL" id="AABR07062464">
    <property type="status" value="NOT_ANNOTATED_CDS"/>
    <property type="molecule type" value="Genomic_DNA"/>
</dbReference>
<dbReference type="EMBL" id="AABR07073087">
    <property type="status" value="NOT_ANNOTATED_CDS"/>
    <property type="molecule type" value="Genomic_DNA"/>
</dbReference>
<dbReference type="EMBL" id="AC121477">
    <property type="status" value="NOT_ANNOTATED_CDS"/>
    <property type="molecule type" value="Genomic_DNA"/>
</dbReference>
<dbReference type="EMBL" id="BC086415">
    <property type="protein sequence ID" value="AAH86415.1"/>
    <property type="molecule type" value="mRNA"/>
</dbReference>
<dbReference type="RefSeq" id="NP_001014082.1">
    <molecule id="F1M8W4-2"/>
    <property type="nucleotide sequence ID" value="NM_001014060.2"/>
</dbReference>
<dbReference type="RefSeq" id="NP_001258196.1">
    <molecule id="F1M8W4-1"/>
    <property type="nucleotide sequence ID" value="NM_001271267.2"/>
</dbReference>
<dbReference type="RefSeq" id="XP_008761572.1">
    <property type="nucleotide sequence ID" value="XM_008763350.1"/>
</dbReference>
<dbReference type="SMR" id="F1M8W4"/>
<dbReference type="FunCoup" id="F1M8W4">
    <property type="interactions" value="895"/>
</dbReference>
<dbReference type="STRING" id="10116.ENSRNOP00000052404"/>
<dbReference type="GlyGen" id="F1M8W4">
    <property type="glycosylation" value="1 site"/>
</dbReference>
<dbReference type="PhosphoSitePlus" id="F1M8W4"/>
<dbReference type="PaxDb" id="10116-ENSRNOP00000052404"/>
<dbReference type="Ensembl" id="ENSRNOT00000055542.4">
    <molecule id="F1M8W4-1"/>
    <property type="protein sequence ID" value="ENSRNOP00000052404.3"/>
    <property type="gene ID" value="ENSRNOG00000027869.7"/>
</dbReference>
<dbReference type="GeneID" id="140587"/>
<dbReference type="KEGG" id="rno:140587"/>
<dbReference type="UCSC" id="RGD:1359322">
    <property type="organism name" value="rat"/>
</dbReference>
<dbReference type="AGR" id="RGD:620471"/>
<dbReference type="CTD" id="6660"/>
<dbReference type="RGD" id="620471">
    <property type="gene designation" value="Sox5"/>
</dbReference>
<dbReference type="eggNOG" id="KOG0528">
    <property type="taxonomic scope" value="Eukaryota"/>
</dbReference>
<dbReference type="GeneTree" id="ENSGT00940000156122"/>
<dbReference type="HOGENOM" id="CLU_018522_0_1_1"/>
<dbReference type="InParanoid" id="F1M8W4"/>
<dbReference type="OMA" id="PPPKSKX"/>
<dbReference type="OrthoDB" id="6247875at2759"/>
<dbReference type="TreeFam" id="TF320471"/>
<dbReference type="PRO" id="PR:F1M8W4"/>
<dbReference type="Proteomes" id="UP000002494">
    <property type="component" value="Chromosome 4"/>
</dbReference>
<dbReference type="Bgee" id="ENSRNOG00000027869">
    <property type="expression patterns" value="Expressed in testis and 16 other cell types or tissues"/>
</dbReference>
<dbReference type="ExpressionAtlas" id="F1M8W4">
    <property type="expression patterns" value="baseline and differential"/>
</dbReference>
<dbReference type="GO" id="GO:0005634">
    <property type="term" value="C:nucleus"/>
    <property type="evidence" value="ECO:0000318"/>
    <property type="project" value="GO_Central"/>
</dbReference>
<dbReference type="GO" id="GO:0005667">
    <property type="term" value="C:transcription regulator complex"/>
    <property type="evidence" value="ECO:0000266"/>
    <property type="project" value="RGD"/>
</dbReference>
<dbReference type="GO" id="GO:0000987">
    <property type="term" value="F:cis-regulatory region sequence-specific DNA binding"/>
    <property type="evidence" value="ECO:0000314"/>
    <property type="project" value="UniProtKB"/>
</dbReference>
<dbReference type="GO" id="GO:0003700">
    <property type="term" value="F:DNA-binding transcription factor activity"/>
    <property type="evidence" value="ECO:0000266"/>
    <property type="project" value="RGD"/>
</dbReference>
<dbReference type="GO" id="GO:0000981">
    <property type="term" value="F:DNA-binding transcription factor activity, RNA polymerase II-specific"/>
    <property type="evidence" value="ECO:0000266"/>
    <property type="project" value="RGD"/>
</dbReference>
<dbReference type="GO" id="GO:0000978">
    <property type="term" value="F:RNA polymerase II cis-regulatory region sequence-specific DNA binding"/>
    <property type="evidence" value="ECO:0000318"/>
    <property type="project" value="GO_Central"/>
</dbReference>
<dbReference type="GO" id="GO:0000976">
    <property type="term" value="F:transcription cis-regulatory region binding"/>
    <property type="evidence" value="ECO:0000266"/>
    <property type="project" value="RGD"/>
</dbReference>
<dbReference type="GO" id="GO:0055059">
    <property type="term" value="P:asymmetric neuroblast division"/>
    <property type="evidence" value="ECO:0000266"/>
    <property type="project" value="RGD"/>
</dbReference>
<dbReference type="GO" id="GO:0001502">
    <property type="term" value="P:cartilage condensation"/>
    <property type="evidence" value="ECO:0000250"/>
    <property type="project" value="UniProtKB"/>
</dbReference>
<dbReference type="GO" id="GO:0051216">
    <property type="term" value="P:cartilage development"/>
    <property type="evidence" value="ECO:0000250"/>
    <property type="project" value="UniProtKB"/>
</dbReference>
<dbReference type="GO" id="GO:0045165">
    <property type="term" value="P:cell fate commitment"/>
    <property type="evidence" value="ECO:0000266"/>
    <property type="project" value="RGD"/>
</dbReference>
<dbReference type="GO" id="GO:0071560">
    <property type="term" value="P:cellular response to transforming growth factor beta stimulus"/>
    <property type="evidence" value="ECO:0000266"/>
    <property type="project" value="RGD"/>
</dbReference>
<dbReference type="GO" id="GO:0021953">
    <property type="term" value="P:central nervous system neuron differentiation"/>
    <property type="evidence" value="ECO:0000266"/>
    <property type="project" value="RGD"/>
</dbReference>
<dbReference type="GO" id="GO:0002062">
    <property type="term" value="P:chondrocyte differentiation"/>
    <property type="evidence" value="ECO:0000250"/>
    <property type="project" value="UniProtKB"/>
</dbReference>
<dbReference type="GO" id="GO:0001701">
    <property type="term" value="P:in utero embryonic development"/>
    <property type="evidence" value="ECO:0000266"/>
    <property type="project" value="RGD"/>
</dbReference>
<dbReference type="GO" id="GO:0045892">
    <property type="term" value="P:negative regulation of DNA-templated transcription"/>
    <property type="evidence" value="ECO:0000266"/>
    <property type="project" value="RGD"/>
</dbReference>
<dbReference type="GO" id="GO:0048709">
    <property type="term" value="P:oligodendrocyte differentiation"/>
    <property type="evidence" value="ECO:0000266"/>
    <property type="project" value="RGD"/>
</dbReference>
<dbReference type="GO" id="GO:0061036">
    <property type="term" value="P:positive regulation of cartilage development"/>
    <property type="evidence" value="ECO:0000266"/>
    <property type="project" value="RGD"/>
</dbReference>
<dbReference type="GO" id="GO:0032332">
    <property type="term" value="P:positive regulation of chondrocyte differentiation"/>
    <property type="evidence" value="ECO:0000266"/>
    <property type="project" value="RGD"/>
</dbReference>
<dbReference type="GO" id="GO:2000741">
    <property type="term" value="P:positive regulation of mesenchymal stem cell differentiation"/>
    <property type="evidence" value="ECO:0000266"/>
    <property type="project" value="RGD"/>
</dbReference>
<dbReference type="GO" id="GO:0060164">
    <property type="term" value="P:regulation of timing of neuron differentiation"/>
    <property type="evidence" value="ECO:0000266"/>
    <property type="project" value="RGD"/>
</dbReference>
<dbReference type="GO" id="GO:0006357">
    <property type="term" value="P:regulation of transcription by RNA polymerase II"/>
    <property type="evidence" value="ECO:0000318"/>
    <property type="project" value="GO_Central"/>
</dbReference>
<dbReference type="CDD" id="cd22042">
    <property type="entry name" value="HMG-box_EGL13-like"/>
    <property type="match status" value="1"/>
</dbReference>
<dbReference type="FunFam" id="1.10.30.10:FF:000003">
    <property type="entry name" value="Putative transcription factor SOX-6"/>
    <property type="match status" value="1"/>
</dbReference>
<dbReference type="Gene3D" id="1.10.30.10">
    <property type="entry name" value="High mobility group box domain"/>
    <property type="match status" value="1"/>
</dbReference>
<dbReference type="InterPro" id="IPR009071">
    <property type="entry name" value="HMG_box_dom"/>
</dbReference>
<dbReference type="InterPro" id="IPR036910">
    <property type="entry name" value="HMG_box_dom_sf"/>
</dbReference>
<dbReference type="InterPro" id="IPR051356">
    <property type="entry name" value="SOX/SOX-like_TF"/>
</dbReference>
<dbReference type="PANTHER" id="PTHR45789">
    <property type="entry name" value="FI18025P1"/>
    <property type="match status" value="1"/>
</dbReference>
<dbReference type="PANTHER" id="PTHR45789:SF3">
    <property type="entry name" value="TRANSCRIPTION FACTOR SOX-5"/>
    <property type="match status" value="1"/>
</dbReference>
<dbReference type="Pfam" id="PF00505">
    <property type="entry name" value="HMG_box"/>
    <property type="match status" value="1"/>
</dbReference>
<dbReference type="SMART" id="SM00398">
    <property type="entry name" value="HMG"/>
    <property type="match status" value="1"/>
</dbReference>
<dbReference type="SUPFAM" id="SSF47095">
    <property type="entry name" value="HMG-box"/>
    <property type="match status" value="1"/>
</dbReference>
<dbReference type="PROSITE" id="PS50118">
    <property type="entry name" value="HMG_BOX_2"/>
    <property type="match status" value="1"/>
</dbReference>